<proteinExistence type="inferred from homology"/>
<sequence>MQHESPTSGMNMSALRRHKQRLDLADESVAIEVPGLNLFYGDKQALFDIALNIPKQKVTSFIGPSGCGKSTLLRCFNRMNDLVDGCRVEGAINLYGHNIYTKGEEVAELRRRVGMVFQKPNPFPKTIYENVVYGLRIQGINKKRVLDEAVEWALKAAALWDEVKDRLHESALGLSGGQQQRLVIARTIAVEPEVLLLDEPCSALDPISTLKVEELIYELKSKYTIVIVTHNMQQAARVSDYTAFMYMGKLVEFGDTDTLFTNPAKKQTEDYITGRYG</sequence>
<reference key="1">
    <citation type="journal article" date="2005" name="Proc. Natl. Acad. Sci. U.S.A.">
        <title>Comparison of the complete genome sequences of Pseudomonas syringae pv. syringae B728a and pv. tomato DC3000.</title>
        <authorList>
            <person name="Feil H."/>
            <person name="Feil W.S."/>
            <person name="Chain P."/>
            <person name="Larimer F."/>
            <person name="Dibartolo G."/>
            <person name="Copeland A."/>
            <person name="Lykidis A."/>
            <person name="Trong S."/>
            <person name="Nolan M."/>
            <person name="Goltsman E."/>
            <person name="Thiel J."/>
            <person name="Malfatti S."/>
            <person name="Loper J.E."/>
            <person name="Lapidus A."/>
            <person name="Detter J.C."/>
            <person name="Land M."/>
            <person name="Richardson P.M."/>
            <person name="Kyrpides N.C."/>
            <person name="Ivanova N."/>
            <person name="Lindow S.E."/>
        </authorList>
    </citation>
    <scope>NUCLEOTIDE SEQUENCE [LARGE SCALE GENOMIC DNA]</scope>
    <source>
        <strain>B728a</strain>
    </source>
</reference>
<keyword id="KW-0067">ATP-binding</keyword>
<keyword id="KW-0997">Cell inner membrane</keyword>
<keyword id="KW-1003">Cell membrane</keyword>
<keyword id="KW-0472">Membrane</keyword>
<keyword id="KW-0547">Nucleotide-binding</keyword>
<keyword id="KW-0592">Phosphate transport</keyword>
<keyword id="KW-1278">Translocase</keyword>
<keyword id="KW-0813">Transport</keyword>
<protein>
    <recommendedName>
        <fullName evidence="1">Phosphate import ATP-binding protein PstB 2</fullName>
        <ecNumber evidence="1">7.3.2.1</ecNumber>
    </recommendedName>
    <alternativeName>
        <fullName evidence="1">ABC phosphate transporter 2</fullName>
    </alternativeName>
    <alternativeName>
        <fullName evidence="1">Phosphate-transporting ATPase 2</fullName>
    </alternativeName>
</protein>
<comment type="function">
    <text evidence="1">Part of the ABC transporter complex PstSACB involved in phosphate import. Responsible for energy coupling to the transport system.</text>
</comment>
<comment type="catalytic activity">
    <reaction evidence="1">
        <text>phosphate(out) + ATP + H2O = ADP + 2 phosphate(in) + H(+)</text>
        <dbReference type="Rhea" id="RHEA:24440"/>
        <dbReference type="ChEBI" id="CHEBI:15377"/>
        <dbReference type="ChEBI" id="CHEBI:15378"/>
        <dbReference type="ChEBI" id="CHEBI:30616"/>
        <dbReference type="ChEBI" id="CHEBI:43474"/>
        <dbReference type="ChEBI" id="CHEBI:456216"/>
        <dbReference type="EC" id="7.3.2.1"/>
    </reaction>
</comment>
<comment type="subunit">
    <text evidence="1">The complex is composed of two ATP-binding proteins (PstB), two transmembrane proteins (PstC and PstA) and a solute-binding protein (PstS).</text>
</comment>
<comment type="subcellular location">
    <subcellularLocation>
        <location evidence="1">Cell inner membrane</location>
        <topology evidence="1">Peripheral membrane protein</topology>
    </subcellularLocation>
</comment>
<comment type="similarity">
    <text evidence="1">Belongs to the ABC transporter superfamily. Phosphate importer (TC 3.A.1.7) family.</text>
</comment>
<accession>Q4ZLA7</accession>
<organism>
    <name type="scientific">Pseudomonas syringae pv. syringae (strain B728a)</name>
    <dbReference type="NCBI Taxonomy" id="205918"/>
    <lineage>
        <taxon>Bacteria</taxon>
        <taxon>Pseudomonadati</taxon>
        <taxon>Pseudomonadota</taxon>
        <taxon>Gammaproteobacteria</taxon>
        <taxon>Pseudomonadales</taxon>
        <taxon>Pseudomonadaceae</taxon>
        <taxon>Pseudomonas</taxon>
        <taxon>Pseudomonas syringae</taxon>
    </lineage>
</organism>
<name>PSTB2_PSEU2</name>
<evidence type="ECO:0000255" key="1">
    <source>
        <dbReference type="HAMAP-Rule" id="MF_01702"/>
    </source>
</evidence>
<dbReference type="EC" id="7.3.2.1" evidence="1"/>
<dbReference type="EMBL" id="CP000075">
    <property type="protein sequence ID" value="AAY40065.1"/>
    <property type="molecule type" value="Genomic_DNA"/>
</dbReference>
<dbReference type="RefSeq" id="YP_238103.1">
    <property type="nucleotide sequence ID" value="NC_007005.1"/>
</dbReference>
<dbReference type="SMR" id="Q4ZLA7"/>
<dbReference type="STRING" id="205918.Psyr_5038"/>
<dbReference type="KEGG" id="psb:Psyr_5038"/>
<dbReference type="PATRIC" id="fig|205918.7.peg.5197"/>
<dbReference type="eggNOG" id="COG1117">
    <property type="taxonomic scope" value="Bacteria"/>
</dbReference>
<dbReference type="HOGENOM" id="CLU_000604_1_22_6"/>
<dbReference type="OrthoDB" id="9802264at2"/>
<dbReference type="Proteomes" id="UP000000426">
    <property type="component" value="Chromosome"/>
</dbReference>
<dbReference type="GO" id="GO:0005886">
    <property type="term" value="C:plasma membrane"/>
    <property type="evidence" value="ECO:0007669"/>
    <property type="project" value="UniProtKB-SubCell"/>
</dbReference>
<dbReference type="GO" id="GO:0005524">
    <property type="term" value="F:ATP binding"/>
    <property type="evidence" value="ECO:0007669"/>
    <property type="project" value="UniProtKB-KW"/>
</dbReference>
<dbReference type="GO" id="GO:0016887">
    <property type="term" value="F:ATP hydrolysis activity"/>
    <property type="evidence" value="ECO:0007669"/>
    <property type="project" value="InterPro"/>
</dbReference>
<dbReference type="GO" id="GO:0015415">
    <property type="term" value="F:ATPase-coupled phosphate ion transmembrane transporter activity"/>
    <property type="evidence" value="ECO:0007669"/>
    <property type="project" value="UniProtKB-EC"/>
</dbReference>
<dbReference type="GO" id="GO:0035435">
    <property type="term" value="P:phosphate ion transmembrane transport"/>
    <property type="evidence" value="ECO:0007669"/>
    <property type="project" value="InterPro"/>
</dbReference>
<dbReference type="CDD" id="cd03260">
    <property type="entry name" value="ABC_PstB_phosphate_transporter"/>
    <property type="match status" value="1"/>
</dbReference>
<dbReference type="FunFam" id="3.40.50.300:FF:000132">
    <property type="entry name" value="Phosphate import ATP-binding protein PstB"/>
    <property type="match status" value="1"/>
</dbReference>
<dbReference type="Gene3D" id="3.40.50.300">
    <property type="entry name" value="P-loop containing nucleotide triphosphate hydrolases"/>
    <property type="match status" value="1"/>
</dbReference>
<dbReference type="InterPro" id="IPR003593">
    <property type="entry name" value="AAA+_ATPase"/>
</dbReference>
<dbReference type="InterPro" id="IPR003439">
    <property type="entry name" value="ABC_transporter-like_ATP-bd"/>
</dbReference>
<dbReference type="InterPro" id="IPR017871">
    <property type="entry name" value="ABC_transporter-like_CS"/>
</dbReference>
<dbReference type="InterPro" id="IPR027417">
    <property type="entry name" value="P-loop_NTPase"/>
</dbReference>
<dbReference type="InterPro" id="IPR005670">
    <property type="entry name" value="PstB-like"/>
</dbReference>
<dbReference type="NCBIfam" id="TIGR00972">
    <property type="entry name" value="3a0107s01c2"/>
    <property type="match status" value="1"/>
</dbReference>
<dbReference type="PANTHER" id="PTHR43423">
    <property type="entry name" value="ABC TRANSPORTER I FAMILY MEMBER 17"/>
    <property type="match status" value="1"/>
</dbReference>
<dbReference type="PANTHER" id="PTHR43423:SF12">
    <property type="entry name" value="IRON EXPORT ATP-BINDING PROTEIN FETA-RELATED"/>
    <property type="match status" value="1"/>
</dbReference>
<dbReference type="Pfam" id="PF00005">
    <property type="entry name" value="ABC_tran"/>
    <property type="match status" value="1"/>
</dbReference>
<dbReference type="SMART" id="SM00382">
    <property type="entry name" value="AAA"/>
    <property type="match status" value="1"/>
</dbReference>
<dbReference type="SUPFAM" id="SSF52540">
    <property type="entry name" value="P-loop containing nucleoside triphosphate hydrolases"/>
    <property type="match status" value="1"/>
</dbReference>
<dbReference type="PROSITE" id="PS00211">
    <property type="entry name" value="ABC_TRANSPORTER_1"/>
    <property type="match status" value="1"/>
</dbReference>
<dbReference type="PROSITE" id="PS50893">
    <property type="entry name" value="ABC_TRANSPORTER_2"/>
    <property type="match status" value="1"/>
</dbReference>
<dbReference type="PROSITE" id="PS51238">
    <property type="entry name" value="PSTB"/>
    <property type="match status" value="1"/>
</dbReference>
<gene>
    <name evidence="1" type="primary">pstB2</name>
    <name type="ordered locus">Psyr_5038</name>
</gene>
<feature type="chain" id="PRO_0000272502" description="Phosphate import ATP-binding protein PstB 2">
    <location>
        <begin position="1"/>
        <end position="277"/>
    </location>
</feature>
<feature type="domain" description="ABC transporter" evidence="1">
    <location>
        <begin position="31"/>
        <end position="272"/>
    </location>
</feature>
<feature type="binding site" evidence="1">
    <location>
        <begin position="63"/>
        <end position="70"/>
    </location>
    <ligand>
        <name>ATP</name>
        <dbReference type="ChEBI" id="CHEBI:30616"/>
    </ligand>
</feature>